<accession>B5F680</accession>
<organism>
    <name type="scientific">Salmonella agona (strain SL483)</name>
    <dbReference type="NCBI Taxonomy" id="454166"/>
    <lineage>
        <taxon>Bacteria</taxon>
        <taxon>Pseudomonadati</taxon>
        <taxon>Pseudomonadota</taxon>
        <taxon>Gammaproteobacteria</taxon>
        <taxon>Enterobacterales</taxon>
        <taxon>Enterobacteriaceae</taxon>
        <taxon>Salmonella</taxon>
    </lineage>
</organism>
<evidence type="ECO:0000255" key="1">
    <source>
        <dbReference type="HAMAP-Rule" id="MF_01188"/>
    </source>
</evidence>
<evidence type="ECO:0000256" key="2">
    <source>
        <dbReference type="SAM" id="MobiDB-lite"/>
    </source>
</evidence>
<gene>
    <name evidence="1" type="primary">ygiB</name>
    <name type="ordered locus">SeAg_B3368</name>
</gene>
<feature type="chain" id="PRO_1000138347" description="UPF0441 protein YgiB">
    <location>
        <begin position="1"/>
        <end position="223"/>
    </location>
</feature>
<feature type="region of interest" description="Disordered" evidence="2">
    <location>
        <begin position="178"/>
        <end position="223"/>
    </location>
</feature>
<feature type="compositionally biased region" description="Low complexity" evidence="2">
    <location>
        <begin position="178"/>
        <end position="195"/>
    </location>
</feature>
<feature type="compositionally biased region" description="Polar residues" evidence="2">
    <location>
        <begin position="204"/>
        <end position="223"/>
    </location>
</feature>
<reference key="1">
    <citation type="journal article" date="2011" name="J. Bacteriol.">
        <title>Comparative genomics of 28 Salmonella enterica isolates: evidence for CRISPR-mediated adaptive sublineage evolution.</title>
        <authorList>
            <person name="Fricke W.F."/>
            <person name="Mammel M.K."/>
            <person name="McDermott P.F."/>
            <person name="Tartera C."/>
            <person name="White D.G."/>
            <person name="Leclerc J.E."/>
            <person name="Ravel J."/>
            <person name="Cebula T.A."/>
        </authorList>
    </citation>
    <scope>NUCLEOTIDE SEQUENCE [LARGE SCALE GENOMIC DNA]</scope>
    <source>
        <strain>SL483</strain>
    </source>
</reference>
<proteinExistence type="inferred from homology"/>
<comment type="similarity">
    <text evidence="1">Belongs to the UPF0441 family.</text>
</comment>
<name>YGIB_SALA4</name>
<protein>
    <recommendedName>
        <fullName evidence="1">UPF0441 protein YgiB</fullName>
    </recommendedName>
</protein>
<dbReference type="EMBL" id="CP001138">
    <property type="protein sequence ID" value="ACH51882.1"/>
    <property type="molecule type" value="Genomic_DNA"/>
</dbReference>
<dbReference type="RefSeq" id="WP_000831528.1">
    <property type="nucleotide sequence ID" value="NC_011149.1"/>
</dbReference>
<dbReference type="KEGG" id="sea:SeAg_B3368"/>
<dbReference type="HOGENOM" id="CLU_095624_0_0_6"/>
<dbReference type="Proteomes" id="UP000008819">
    <property type="component" value="Chromosome"/>
</dbReference>
<dbReference type="HAMAP" id="MF_01188">
    <property type="entry name" value="UPF0441"/>
    <property type="match status" value="1"/>
</dbReference>
<dbReference type="InterPro" id="IPR009576">
    <property type="entry name" value="Biofilm_formation_YgiB"/>
</dbReference>
<dbReference type="NCBIfam" id="NF008655">
    <property type="entry name" value="PRK11653.1"/>
    <property type="match status" value="1"/>
</dbReference>
<dbReference type="Pfam" id="PF06693">
    <property type="entry name" value="DUF1190"/>
    <property type="match status" value="1"/>
</dbReference>
<sequence>MKRTKSIHHASFRKSWSARHLTPVALAVTAVFMLAGCEKSDETVSLYQNADDCSAANPGKSAECTTAYNNALKEAERTAPKYATREDCVAEFGEGQCQQAPAQAGMAPENQAQAQQSSGSFWMPLMAGYMMGRLMGGGAGFAQQPLFSSKNPASPAYGKYTDAAGKNYGAAQPGRTMTVPKTAMAPKPATTTTVTRGGFGESVAKQSTMQRSAAGTSTRSMGG</sequence>